<gene>
    <name evidence="1" type="primary">caiT</name>
    <name type="ordered locus">STY0084</name>
    <name type="ordered locus">t0075</name>
</gene>
<feature type="chain" id="PRO_0000201490" description="L-carnitine/gamma-butyrobetaine antiporter">
    <location>
        <begin position="1"/>
        <end position="505"/>
    </location>
</feature>
<feature type="transmembrane region" description="Helical" evidence="1">
    <location>
        <begin position="10"/>
        <end position="30"/>
    </location>
</feature>
<feature type="transmembrane region" description="Helical" evidence="1">
    <location>
        <begin position="51"/>
        <end position="71"/>
    </location>
</feature>
<feature type="transmembrane region" description="Helical" evidence="1">
    <location>
        <begin position="92"/>
        <end position="112"/>
    </location>
</feature>
<feature type="transmembrane region" description="Helical" evidence="1">
    <location>
        <begin position="143"/>
        <end position="163"/>
    </location>
</feature>
<feature type="transmembrane region" description="Helical" evidence="1">
    <location>
        <begin position="195"/>
        <end position="215"/>
    </location>
</feature>
<feature type="transmembrane region" description="Helical" evidence="1">
    <location>
        <begin position="231"/>
        <end position="251"/>
    </location>
</feature>
<feature type="transmembrane region" description="Helical" evidence="1">
    <location>
        <begin position="263"/>
        <end position="283"/>
    </location>
</feature>
<feature type="transmembrane region" description="Helical" evidence="1">
    <location>
        <begin position="316"/>
        <end position="336"/>
    </location>
</feature>
<feature type="transmembrane region" description="Helical" evidence="1">
    <location>
        <begin position="347"/>
        <end position="367"/>
    </location>
</feature>
<feature type="transmembrane region" description="Helical" evidence="1">
    <location>
        <begin position="403"/>
        <end position="423"/>
    </location>
</feature>
<feature type="transmembrane region" description="Helical" evidence="1">
    <location>
        <begin position="446"/>
        <end position="466"/>
    </location>
</feature>
<feature type="transmembrane region" description="Helical" evidence="1">
    <location>
        <begin position="475"/>
        <end position="495"/>
    </location>
</feature>
<keyword id="KW-0050">Antiport</keyword>
<keyword id="KW-0997">Cell inner membrane</keyword>
<keyword id="KW-1003">Cell membrane</keyword>
<keyword id="KW-0472">Membrane</keyword>
<keyword id="KW-0812">Transmembrane</keyword>
<keyword id="KW-1133">Transmembrane helix</keyword>
<keyword id="KW-0813">Transport</keyword>
<proteinExistence type="inferred from homology"/>
<sequence length="505" mass="56748">MKNEKRKSGIEPKVFFPLLIIVGILCWLTVRDLDAANVVINAVFSYVTNVWGWAFEWYMVVMLFSWFWLVFGPYAKKRLGDEKPEFSTASWIFMMFASCTSAAVLFWGSIEIYYYISTPPFGLEPNSTGAKEIGLAYSLFHWGPLPWATYSFLSVAFAYFFFVRKMDVIRPSSTLVPLVGEKHAKGLFSTIVDNFYLVALIFAMGTSLGLATPLVTECMQWLFGIPHTLQLDAIIITCWIILNAICVACGLQKGVRIASDVRSYLSFLMLGWVFIVSGASFIMNYFTDSVGMLLMHLPRMLFYTDAIGKGGFPQGWTVFYWAWWVIYAIQMSIFLARISRGRTVRELCFGMVMGLTASTWILWTVLGSNTLLLMDKNILNIPQLIEQHGVARAIIETWAALPLSTATMWGFFILCFIATVTLINACSYTLAMSTCREVRDGEEPPLLVRIGWSVLVGIIGIVLLALGGLKPIQTAIIAGGCPLFFVNIMVTLSFIKDAKVHWKDK</sequence>
<accession>Q8Z9L1</accession>
<reference key="1">
    <citation type="journal article" date="2001" name="Nature">
        <title>Complete genome sequence of a multiple drug resistant Salmonella enterica serovar Typhi CT18.</title>
        <authorList>
            <person name="Parkhill J."/>
            <person name="Dougan G."/>
            <person name="James K.D."/>
            <person name="Thomson N.R."/>
            <person name="Pickard D."/>
            <person name="Wain J."/>
            <person name="Churcher C.M."/>
            <person name="Mungall K.L."/>
            <person name="Bentley S.D."/>
            <person name="Holden M.T.G."/>
            <person name="Sebaihia M."/>
            <person name="Baker S."/>
            <person name="Basham D."/>
            <person name="Brooks K."/>
            <person name="Chillingworth T."/>
            <person name="Connerton P."/>
            <person name="Cronin A."/>
            <person name="Davis P."/>
            <person name="Davies R.M."/>
            <person name="Dowd L."/>
            <person name="White N."/>
            <person name="Farrar J."/>
            <person name="Feltwell T."/>
            <person name="Hamlin N."/>
            <person name="Haque A."/>
            <person name="Hien T.T."/>
            <person name="Holroyd S."/>
            <person name="Jagels K."/>
            <person name="Krogh A."/>
            <person name="Larsen T.S."/>
            <person name="Leather S."/>
            <person name="Moule S."/>
            <person name="O'Gaora P."/>
            <person name="Parry C."/>
            <person name="Quail M.A."/>
            <person name="Rutherford K.M."/>
            <person name="Simmonds M."/>
            <person name="Skelton J."/>
            <person name="Stevens K."/>
            <person name="Whitehead S."/>
            <person name="Barrell B.G."/>
        </authorList>
    </citation>
    <scope>NUCLEOTIDE SEQUENCE [LARGE SCALE GENOMIC DNA]</scope>
    <source>
        <strain>CT18</strain>
    </source>
</reference>
<reference key="2">
    <citation type="journal article" date="2003" name="J. Bacteriol.">
        <title>Comparative genomics of Salmonella enterica serovar Typhi strains Ty2 and CT18.</title>
        <authorList>
            <person name="Deng W."/>
            <person name="Liou S.-R."/>
            <person name="Plunkett G. III"/>
            <person name="Mayhew G.F."/>
            <person name="Rose D.J."/>
            <person name="Burland V."/>
            <person name="Kodoyianni V."/>
            <person name="Schwartz D.C."/>
            <person name="Blattner F.R."/>
        </authorList>
    </citation>
    <scope>NUCLEOTIDE SEQUENCE [LARGE SCALE GENOMIC DNA]</scope>
    <source>
        <strain>ATCC 700931 / Ty2</strain>
    </source>
</reference>
<protein>
    <recommendedName>
        <fullName evidence="1">L-carnitine/gamma-butyrobetaine antiporter</fullName>
    </recommendedName>
</protein>
<dbReference type="EMBL" id="AL513382">
    <property type="protein sequence ID" value="CAD01228.1"/>
    <property type="molecule type" value="Genomic_DNA"/>
</dbReference>
<dbReference type="EMBL" id="AE014613">
    <property type="protein sequence ID" value="AAO67808.1"/>
    <property type="molecule type" value="Genomic_DNA"/>
</dbReference>
<dbReference type="RefSeq" id="NP_454684.1">
    <property type="nucleotide sequence ID" value="NC_003198.1"/>
</dbReference>
<dbReference type="RefSeq" id="WP_000787084.1">
    <property type="nucleotide sequence ID" value="NZ_WSUR01000028.1"/>
</dbReference>
<dbReference type="SMR" id="Q8Z9L1"/>
<dbReference type="STRING" id="220341.gene:17584130"/>
<dbReference type="KEGG" id="stt:t0075"/>
<dbReference type="KEGG" id="sty:STY0084"/>
<dbReference type="PATRIC" id="fig|220341.7.peg.83"/>
<dbReference type="eggNOG" id="COG1292">
    <property type="taxonomic scope" value="Bacteria"/>
</dbReference>
<dbReference type="HOGENOM" id="CLU_010118_6_0_6"/>
<dbReference type="OMA" id="FYWAWAL"/>
<dbReference type="UniPathway" id="UPA00117"/>
<dbReference type="Proteomes" id="UP000000541">
    <property type="component" value="Chromosome"/>
</dbReference>
<dbReference type="Proteomes" id="UP000002670">
    <property type="component" value="Chromosome"/>
</dbReference>
<dbReference type="GO" id="GO:0005886">
    <property type="term" value="C:plasma membrane"/>
    <property type="evidence" value="ECO:0007669"/>
    <property type="project" value="UniProtKB-SubCell"/>
</dbReference>
<dbReference type="GO" id="GO:0044667">
    <property type="term" value="F:(R)-carnitine:4-(trimethylammonio)butanoate antiporter activity"/>
    <property type="evidence" value="ECO:0007669"/>
    <property type="project" value="UniProtKB-UniRule"/>
</dbReference>
<dbReference type="GO" id="GO:1900751">
    <property type="term" value="P:4-(trimethylammonio)butanoate transport"/>
    <property type="evidence" value="ECO:0007669"/>
    <property type="project" value="InterPro"/>
</dbReference>
<dbReference type="GO" id="GO:0009437">
    <property type="term" value="P:carnitine metabolic process"/>
    <property type="evidence" value="ECO:0007669"/>
    <property type="project" value="UniProtKB-UniRule"/>
</dbReference>
<dbReference type="HAMAP" id="MF_01049">
    <property type="entry name" value="CaiT"/>
    <property type="match status" value="1"/>
</dbReference>
<dbReference type="InterPro" id="IPR018093">
    <property type="entry name" value="BCCT_CS"/>
</dbReference>
<dbReference type="InterPro" id="IPR000060">
    <property type="entry name" value="BCCT_transptr"/>
</dbReference>
<dbReference type="InterPro" id="IPR023449">
    <property type="entry name" value="BCCT_transptr_CaiT"/>
</dbReference>
<dbReference type="NCBIfam" id="TIGR00842">
    <property type="entry name" value="bcct"/>
    <property type="match status" value="1"/>
</dbReference>
<dbReference type="NCBIfam" id="NF002887">
    <property type="entry name" value="PRK03356.1"/>
    <property type="match status" value="1"/>
</dbReference>
<dbReference type="PANTHER" id="PTHR30047">
    <property type="entry name" value="HIGH-AFFINITY CHOLINE TRANSPORT PROTEIN-RELATED"/>
    <property type="match status" value="1"/>
</dbReference>
<dbReference type="PANTHER" id="PTHR30047:SF11">
    <property type="entry name" value="L-CARNITINE_GAMMA-BUTYROBETAINE ANTIPORTER"/>
    <property type="match status" value="1"/>
</dbReference>
<dbReference type="Pfam" id="PF02028">
    <property type="entry name" value="BCCT"/>
    <property type="match status" value="1"/>
</dbReference>
<dbReference type="PROSITE" id="PS01303">
    <property type="entry name" value="BCCT"/>
    <property type="match status" value="1"/>
</dbReference>
<organism>
    <name type="scientific">Salmonella typhi</name>
    <dbReference type="NCBI Taxonomy" id="90370"/>
    <lineage>
        <taxon>Bacteria</taxon>
        <taxon>Pseudomonadati</taxon>
        <taxon>Pseudomonadota</taxon>
        <taxon>Gammaproteobacteria</taxon>
        <taxon>Enterobacterales</taxon>
        <taxon>Enterobacteriaceae</taxon>
        <taxon>Salmonella</taxon>
    </lineage>
</organism>
<evidence type="ECO:0000255" key="1">
    <source>
        <dbReference type="HAMAP-Rule" id="MF_01049"/>
    </source>
</evidence>
<name>CAIT_SALTI</name>
<comment type="function">
    <text evidence="1">Catalyzes the exchange of L-carnitine for gamma-butyrobetaine.</text>
</comment>
<comment type="catalytic activity">
    <reaction evidence="1">
        <text>4-(trimethylamino)butanoate(in) + (R)-carnitine(out) = 4-(trimethylamino)butanoate(out) + (R)-carnitine(in)</text>
        <dbReference type="Rhea" id="RHEA:29427"/>
        <dbReference type="ChEBI" id="CHEBI:16244"/>
        <dbReference type="ChEBI" id="CHEBI:16347"/>
    </reaction>
</comment>
<comment type="pathway">
    <text evidence="1">Amine and polyamine metabolism; carnitine metabolism.</text>
</comment>
<comment type="subunit">
    <text evidence="1">Homotrimer.</text>
</comment>
<comment type="subcellular location">
    <subcellularLocation>
        <location evidence="1">Cell inner membrane</location>
        <topology evidence="1">Multi-pass membrane protein</topology>
    </subcellularLocation>
</comment>
<comment type="similarity">
    <text evidence="1">Belongs to the BCCT transporter (TC 2.A.15) family. CaiT subfamily.</text>
</comment>